<proteinExistence type="inferred from homology"/>
<protein>
    <recommendedName>
        <fullName evidence="1">Uracil phosphoribosyltransferase</fullName>
        <ecNumber evidence="1">2.4.2.9</ecNumber>
    </recommendedName>
    <alternativeName>
        <fullName evidence="1">UMP pyrophosphorylase</fullName>
    </alternativeName>
    <alternativeName>
        <fullName evidence="1">UPRTase</fullName>
    </alternativeName>
</protein>
<name>UPP_SYNP6</name>
<organism>
    <name type="scientific">Synechococcus sp. (strain ATCC 27144 / PCC 6301 / SAUG 1402/1)</name>
    <name type="common">Anacystis nidulans</name>
    <dbReference type="NCBI Taxonomy" id="269084"/>
    <lineage>
        <taxon>Bacteria</taxon>
        <taxon>Bacillati</taxon>
        <taxon>Cyanobacteriota</taxon>
        <taxon>Cyanophyceae</taxon>
        <taxon>Synechococcales</taxon>
        <taxon>Synechococcaceae</taxon>
        <taxon>Synechococcus</taxon>
    </lineage>
</organism>
<comment type="function">
    <text evidence="1">Catalyzes the conversion of uracil and 5-phospho-alpha-D-ribose 1-diphosphate (PRPP) to UMP and diphosphate.</text>
</comment>
<comment type="catalytic activity">
    <reaction evidence="1">
        <text>UMP + diphosphate = 5-phospho-alpha-D-ribose 1-diphosphate + uracil</text>
        <dbReference type="Rhea" id="RHEA:13017"/>
        <dbReference type="ChEBI" id="CHEBI:17568"/>
        <dbReference type="ChEBI" id="CHEBI:33019"/>
        <dbReference type="ChEBI" id="CHEBI:57865"/>
        <dbReference type="ChEBI" id="CHEBI:58017"/>
        <dbReference type="EC" id="2.4.2.9"/>
    </reaction>
</comment>
<comment type="cofactor">
    <cofactor evidence="1">
        <name>Mg(2+)</name>
        <dbReference type="ChEBI" id="CHEBI:18420"/>
    </cofactor>
    <text evidence="1">Binds 1 Mg(2+) ion per subunit. The magnesium is bound as Mg-PRPP.</text>
</comment>
<comment type="activity regulation">
    <text evidence="1">Allosterically activated by GTP.</text>
</comment>
<comment type="pathway">
    <text evidence="1">Pyrimidine metabolism; UMP biosynthesis via salvage pathway; UMP from uracil: step 1/1.</text>
</comment>
<comment type="similarity">
    <text evidence="1">Belongs to the UPRTase family.</text>
</comment>
<sequence>MAPQLRIFVPPHPLIRHWLGIARDRQTPTPLFRTAIAELGRWLAYEAVREWLPTIPAAVQTPLAETPAEFVDFSQPLAIVPILRAGLGLVESVQQVLPTARIFHVGLKRDEVSLEPRCYLNHLPEQLEVNSRVLVLDPMLATGGSLLYTLDLLRDRGVSAEQVRVLSIVAAPPALQKLSQAYPALTIYSAIIDEQLNDKGFIVPGLGDAGDRLFGTP</sequence>
<reference key="1">
    <citation type="journal article" date="2007" name="Photosyn. Res.">
        <title>Complete nucleotide sequence of the freshwater unicellular cyanobacterium Synechococcus elongatus PCC 6301 chromosome: gene content and organization.</title>
        <authorList>
            <person name="Sugita C."/>
            <person name="Ogata K."/>
            <person name="Shikata M."/>
            <person name="Jikuya H."/>
            <person name="Takano J."/>
            <person name="Furumichi M."/>
            <person name="Kanehisa M."/>
            <person name="Omata T."/>
            <person name="Sugiura M."/>
            <person name="Sugita M."/>
        </authorList>
    </citation>
    <scope>NUCLEOTIDE SEQUENCE [LARGE SCALE GENOMIC DNA]</scope>
    <source>
        <strain>ATCC 27144 / PCC 6301 / SAUG 1402/1</strain>
    </source>
</reference>
<dbReference type="EC" id="2.4.2.9" evidence="1"/>
<dbReference type="EMBL" id="AP008231">
    <property type="protein sequence ID" value="BAD80566.1"/>
    <property type="molecule type" value="Genomic_DNA"/>
</dbReference>
<dbReference type="RefSeq" id="WP_011244686.1">
    <property type="nucleotide sequence ID" value="NZ_CP085785.1"/>
</dbReference>
<dbReference type="SMR" id="Q5MZF4"/>
<dbReference type="GeneID" id="72430585"/>
<dbReference type="KEGG" id="syc:syc2376_d"/>
<dbReference type="eggNOG" id="COG0035">
    <property type="taxonomic scope" value="Bacteria"/>
</dbReference>
<dbReference type="UniPathway" id="UPA00574">
    <property type="reaction ID" value="UER00636"/>
</dbReference>
<dbReference type="Proteomes" id="UP000001175">
    <property type="component" value="Chromosome"/>
</dbReference>
<dbReference type="GO" id="GO:0005525">
    <property type="term" value="F:GTP binding"/>
    <property type="evidence" value="ECO:0007669"/>
    <property type="project" value="UniProtKB-KW"/>
</dbReference>
<dbReference type="GO" id="GO:0000287">
    <property type="term" value="F:magnesium ion binding"/>
    <property type="evidence" value="ECO:0007669"/>
    <property type="project" value="UniProtKB-UniRule"/>
</dbReference>
<dbReference type="GO" id="GO:0004845">
    <property type="term" value="F:uracil phosphoribosyltransferase activity"/>
    <property type="evidence" value="ECO:0007669"/>
    <property type="project" value="UniProtKB-UniRule"/>
</dbReference>
<dbReference type="GO" id="GO:0044206">
    <property type="term" value="P:UMP salvage"/>
    <property type="evidence" value="ECO:0007669"/>
    <property type="project" value="UniProtKB-UniRule"/>
</dbReference>
<dbReference type="GO" id="GO:0006223">
    <property type="term" value="P:uracil salvage"/>
    <property type="evidence" value="ECO:0007669"/>
    <property type="project" value="InterPro"/>
</dbReference>
<dbReference type="CDD" id="cd06223">
    <property type="entry name" value="PRTases_typeI"/>
    <property type="match status" value="1"/>
</dbReference>
<dbReference type="FunFam" id="3.40.50.2020:FF:000003">
    <property type="entry name" value="Uracil phosphoribosyltransferase"/>
    <property type="match status" value="1"/>
</dbReference>
<dbReference type="Gene3D" id="3.40.50.2020">
    <property type="match status" value="1"/>
</dbReference>
<dbReference type="HAMAP" id="MF_01218_B">
    <property type="entry name" value="Upp_B"/>
    <property type="match status" value="1"/>
</dbReference>
<dbReference type="InterPro" id="IPR000836">
    <property type="entry name" value="PRibTrfase_dom"/>
</dbReference>
<dbReference type="InterPro" id="IPR029057">
    <property type="entry name" value="PRTase-like"/>
</dbReference>
<dbReference type="InterPro" id="IPR034332">
    <property type="entry name" value="Upp_B"/>
</dbReference>
<dbReference type="InterPro" id="IPR050054">
    <property type="entry name" value="UPRTase/APRTase"/>
</dbReference>
<dbReference type="InterPro" id="IPR005765">
    <property type="entry name" value="Ura_phspho_trans"/>
</dbReference>
<dbReference type="NCBIfam" id="NF001097">
    <property type="entry name" value="PRK00129.1"/>
    <property type="match status" value="1"/>
</dbReference>
<dbReference type="NCBIfam" id="TIGR01091">
    <property type="entry name" value="upp"/>
    <property type="match status" value="1"/>
</dbReference>
<dbReference type="PANTHER" id="PTHR32315">
    <property type="entry name" value="ADENINE PHOSPHORIBOSYLTRANSFERASE"/>
    <property type="match status" value="1"/>
</dbReference>
<dbReference type="PANTHER" id="PTHR32315:SF4">
    <property type="entry name" value="URACIL PHOSPHORIBOSYLTRANSFERASE, CHLOROPLASTIC"/>
    <property type="match status" value="1"/>
</dbReference>
<dbReference type="Pfam" id="PF14681">
    <property type="entry name" value="UPRTase"/>
    <property type="match status" value="1"/>
</dbReference>
<dbReference type="SUPFAM" id="SSF53271">
    <property type="entry name" value="PRTase-like"/>
    <property type="match status" value="1"/>
</dbReference>
<gene>
    <name evidence="1" type="primary">upp</name>
    <name type="ordered locus">syc2376_d</name>
</gene>
<keyword id="KW-0021">Allosteric enzyme</keyword>
<keyword id="KW-0328">Glycosyltransferase</keyword>
<keyword id="KW-0342">GTP-binding</keyword>
<keyword id="KW-0460">Magnesium</keyword>
<keyword id="KW-0547">Nucleotide-binding</keyword>
<keyword id="KW-0808">Transferase</keyword>
<feature type="chain" id="PRO_0000120902" description="Uracil phosphoribosyltransferase">
    <location>
        <begin position="1"/>
        <end position="217"/>
    </location>
</feature>
<feature type="binding site" evidence="1">
    <location>
        <position position="84"/>
    </location>
    <ligand>
        <name>5-phospho-alpha-D-ribose 1-diphosphate</name>
        <dbReference type="ChEBI" id="CHEBI:58017"/>
    </ligand>
</feature>
<feature type="binding site" evidence="1">
    <location>
        <position position="109"/>
    </location>
    <ligand>
        <name>5-phospho-alpha-D-ribose 1-diphosphate</name>
        <dbReference type="ChEBI" id="CHEBI:58017"/>
    </ligand>
</feature>
<feature type="binding site" evidence="1">
    <location>
        <begin position="137"/>
        <end position="145"/>
    </location>
    <ligand>
        <name>5-phospho-alpha-D-ribose 1-diphosphate</name>
        <dbReference type="ChEBI" id="CHEBI:58017"/>
    </ligand>
</feature>
<feature type="binding site" evidence="1">
    <location>
        <position position="202"/>
    </location>
    <ligand>
        <name>uracil</name>
        <dbReference type="ChEBI" id="CHEBI:17568"/>
    </ligand>
</feature>
<feature type="binding site" evidence="1">
    <location>
        <begin position="207"/>
        <end position="209"/>
    </location>
    <ligand>
        <name>uracil</name>
        <dbReference type="ChEBI" id="CHEBI:17568"/>
    </ligand>
</feature>
<feature type="binding site" evidence="1">
    <location>
        <position position="208"/>
    </location>
    <ligand>
        <name>5-phospho-alpha-D-ribose 1-diphosphate</name>
        <dbReference type="ChEBI" id="CHEBI:58017"/>
    </ligand>
</feature>
<accession>Q5MZF4</accession>
<evidence type="ECO:0000255" key="1">
    <source>
        <dbReference type="HAMAP-Rule" id="MF_01218"/>
    </source>
</evidence>